<protein>
    <recommendedName>
        <fullName evidence="1">Cytidylate kinase</fullName>
        <shortName evidence="1">CK</shortName>
        <ecNumber evidence="1">2.7.4.25</ecNumber>
    </recommendedName>
    <alternativeName>
        <fullName evidence="1">Cytidine monophosphate kinase</fullName>
        <shortName evidence="1">CMP kinase</shortName>
    </alternativeName>
</protein>
<gene>
    <name evidence="1" type="primary">cmk</name>
    <name type="ordered locus">ECSE_0969</name>
</gene>
<proteinExistence type="inferred from homology"/>
<feature type="chain" id="PRO_1000100662" description="Cytidylate kinase">
    <location>
        <begin position="1"/>
        <end position="227"/>
    </location>
</feature>
<feature type="binding site" evidence="1">
    <location>
        <begin position="12"/>
        <end position="20"/>
    </location>
    <ligand>
        <name>ATP</name>
        <dbReference type="ChEBI" id="CHEBI:30616"/>
    </ligand>
</feature>
<organism>
    <name type="scientific">Escherichia coli (strain SE11)</name>
    <dbReference type="NCBI Taxonomy" id="409438"/>
    <lineage>
        <taxon>Bacteria</taxon>
        <taxon>Pseudomonadati</taxon>
        <taxon>Pseudomonadota</taxon>
        <taxon>Gammaproteobacteria</taxon>
        <taxon>Enterobacterales</taxon>
        <taxon>Enterobacteriaceae</taxon>
        <taxon>Escherichia</taxon>
    </lineage>
</organism>
<name>KCY_ECOSE</name>
<dbReference type="EC" id="2.7.4.25" evidence="1"/>
<dbReference type="EMBL" id="AP009240">
    <property type="protein sequence ID" value="BAG76493.1"/>
    <property type="molecule type" value="Genomic_DNA"/>
</dbReference>
<dbReference type="RefSeq" id="WP_000125016.1">
    <property type="nucleotide sequence ID" value="NC_011415.1"/>
</dbReference>
<dbReference type="SMR" id="B6I8Y2"/>
<dbReference type="GeneID" id="93776507"/>
<dbReference type="KEGG" id="ecy:ECSE_0969"/>
<dbReference type="HOGENOM" id="CLU_079959_0_2_6"/>
<dbReference type="Proteomes" id="UP000008199">
    <property type="component" value="Chromosome"/>
</dbReference>
<dbReference type="GO" id="GO:0005829">
    <property type="term" value="C:cytosol"/>
    <property type="evidence" value="ECO:0007669"/>
    <property type="project" value="TreeGrafter"/>
</dbReference>
<dbReference type="GO" id="GO:0005524">
    <property type="term" value="F:ATP binding"/>
    <property type="evidence" value="ECO:0007669"/>
    <property type="project" value="UniProtKB-UniRule"/>
</dbReference>
<dbReference type="GO" id="GO:0036430">
    <property type="term" value="F:CMP kinase activity"/>
    <property type="evidence" value="ECO:0007669"/>
    <property type="project" value="RHEA"/>
</dbReference>
<dbReference type="GO" id="GO:0036431">
    <property type="term" value="F:dCMP kinase activity"/>
    <property type="evidence" value="ECO:0007669"/>
    <property type="project" value="RHEA"/>
</dbReference>
<dbReference type="GO" id="GO:0015949">
    <property type="term" value="P:nucleobase-containing small molecule interconversion"/>
    <property type="evidence" value="ECO:0007669"/>
    <property type="project" value="TreeGrafter"/>
</dbReference>
<dbReference type="GO" id="GO:0006220">
    <property type="term" value="P:pyrimidine nucleotide metabolic process"/>
    <property type="evidence" value="ECO:0007669"/>
    <property type="project" value="UniProtKB-UniRule"/>
</dbReference>
<dbReference type="CDD" id="cd02020">
    <property type="entry name" value="CMPK"/>
    <property type="match status" value="1"/>
</dbReference>
<dbReference type="FunFam" id="3.40.50.300:FF:000262">
    <property type="entry name" value="Cytidylate kinase"/>
    <property type="match status" value="1"/>
</dbReference>
<dbReference type="Gene3D" id="3.40.50.300">
    <property type="entry name" value="P-loop containing nucleotide triphosphate hydrolases"/>
    <property type="match status" value="1"/>
</dbReference>
<dbReference type="HAMAP" id="MF_00238">
    <property type="entry name" value="Cytidyl_kinase_type1"/>
    <property type="match status" value="1"/>
</dbReference>
<dbReference type="InterPro" id="IPR003136">
    <property type="entry name" value="Cytidylate_kin"/>
</dbReference>
<dbReference type="InterPro" id="IPR011994">
    <property type="entry name" value="Cytidylate_kinase_dom"/>
</dbReference>
<dbReference type="InterPro" id="IPR027417">
    <property type="entry name" value="P-loop_NTPase"/>
</dbReference>
<dbReference type="NCBIfam" id="TIGR00017">
    <property type="entry name" value="cmk"/>
    <property type="match status" value="1"/>
</dbReference>
<dbReference type="PANTHER" id="PTHR21299:SF2">
    <property type="entry name" value="CYTIDYLATE KINASE"/>
    <property type="match status" value="1"/>
</dbReference>
<dbReference type="PANTHER" id="PTHR21299">
    <property type="entry name" value="CYTIDYLATE KINASE/PANTOATE-BETA-ALANINE LIGASE"/>
    <property type="match status" value="1"/>
</dbReference>
<dbReference type="Pfam" id="PF02224">
    <property type="entry name" value="Cytidylate_kin"/>
    <property type="match status" value="1"/>
</dbReference>
<dbReference type="SUPFAM" id="SSF52540">
    <property type="entry name" value="P-loop containing nucleoside triphosphate hydrolases"/>
    <property type="match status" value="1"/>
</dbReference>
<sequence>MTAIAPVITIDGPSGAGKGTLCKAMAEALQWHLLDSGAIYRVLALAALHHHVDVASEDALVPLASHLDVRFVSTNGNLEVILEGEDVSGEIRTQEVANAASQVAAFPRVREALLRRQRAFRELPGLIADGRDMGTVVFPDAPVKIFLDASSEERAHRRMLQLQEKGFSVNFERLLAEIKERDDRDRNRAVAPLVPAADALVLDSTTLSIEQVIEKALQYARQKLALA</sequence>
<evidence type="ECO:0000255" key="1">
    <source>
        <dbReference type="HAMAP-Rule" id="MF_00238"/>
    </source>
</evidence>
<keyword id="KW-0067">ATP-binding</keyword>
<keyword id="KW-0963">Cytoplasm</keyword>
<keyword id="KW-0418">Kinase</keyword>
<keyword id="KW-0547">Nucleotide-binding</keyword>
<keyword id="KW-0808">Transferase</keyword>
<comment type="catalytic activity">
    <reaction evidence="1">
        <text>CMP + ATP = CDP + ADP</text>
        <dbReference type="Rhea" id="RHEA:11600"/>
        <dbReference type="ChEBI" id="CHEBI:30616"/>
        <dbReference type="ChEBI" id="CHEBI:58069"/>
        <dbReference type="ChEBI" id="CHEBI:60377"/>
        <dbReference type="ChEBI" id="CHEBI:456216"/>
        <dbReference type="EC" id="2.7.4.25"/>
    </reaction>
</comment>
<comment type="catalytic activity">
    <reaction evidence="1">
        <text>dCMP + ATP = dCDP + ADP</text>
        <dbReference type="Rhea" id="RHEA:25094"/>
        <dbReference type="ChEBI" id="CHEBI:30616"/>
        <dbReference type="ChEBI" id="CHEBI:57566"/>
        <dbReference type="ChEBI" id="CHEBI:58593"/>
        <dbReference type="ChEBI" id="CHEBI:456216"/>
        <dbReference type="EC" id="2.7.4.25"/>
    </reaction>
</comment>
<comment type="subcellular location">
    <subcellularLocation>
        <location evidence="1">Cytoplasm</location>
    </subcellularLocation>
</comment>
<comment type="similarity">
    <text evidence="1">Belongs to the cytidylate kinase family. Type 1 subfamily.</text>
</comment>
<accession>B6I8Y2</accession>
<reference key="1">
    <citation type="journal article" date="2008" name="DNA Res.">
        <title>Complete genome sequence and comparative analysis of the wild-type commensal Escherichia coli strain SE11 isolated from a healthy adult.</title>
        <authorList>
            <person name="Oshima K."/>
            <person name="Toh H."/>
            <person name="Ogura Y."/>
            <person name="Sasamoto H."/>
            <person name="Morita H."/>
            <person name="Park S.-H."/>
            <person name="Ooka T."/>
            <person name="Iyoda S."/>
            <person name="Taylor T.D."/>
            <person name="Hayashi T."/>
            <person name="Itoh K."/>
            <person name="Hattori M."/>
        </authorList>
    </citation>
    <scope>NUCLEOTIDE SEQUENCE [LARGE SCALE GENOMIC DNA]</scope>
    <source>
        <strain>SE11</strain>
    </source>
</reference>